<accession>Q8CEG0</accession>
<accession>Q8CB28</accession>
<feature type="chain" id="PRO_0000208492" description="Pannexin-3">
    <location>
        <begin position="1"/>
        <end position="392"/>
    </location>
</feature>
<feature type="topological domain" description="Cytoplasmic" evidence="2">
    <location>
        <begin position="1"/>
        <end position="39"/>
    </location>
</feature>
<feature type="transmembrane region" description="Helical" evidence="3">
    <location>
        <begin position="40"/>
        <end position="60"/>
    </location>
</feature>
<feature type="topological domain" description="Extracellular" evidence="2">
    <location>
        <begin position="61"/>
        <end position="113"/>
    </location>
</feature>
<feature type="transmembrane region" description="Helical" evidence="3">
    <location>
        <begin position="114"/>
        <end position="134"/>
    </location>
</feature>
<feature type="topological domain" description="Cytoplasmic" evidence="2">
    <location>
        <begin position="135"/>
        <end position="215"/>
    </location>
</feature>
<feature type="transmembrane region" description="Helical" evidence="3">
    <location>
        <begin position="216"/>
        <end position="236"/>
    </location>
</feature>
<feature type="topological domain" description="Extracellular" evidence="2">
    <location>
        <begin position="237"/>
        <end position="267"/>
    </location>
</feature>
<feature type="transmembrane region" description="Helical" evidence="3">
    <location>
        <begin position="268"/>
        <end position="288"/>
    </location>
</feature>
<feature type="topological domain" description="Cytoplasmic" evidence="2">
    <location>
        <begin position="289"/>
        <end position="392"/>
    </location>
</feature>
<feature type="glycosylation site" description="N-linked (GlcNAc...) asparagine" evidence="4">
    <location>
        <position position="71"/>
    </location>
</feature>
<feature type="mutagenesis site" description="Impairs glycosylation." evidence="4">
    <original>N</original>
    <variation>Q</variation>
    <location>
        <position position="71"/>
    </location>
</feature>
<feature type="sequence conflict" description="In Ref. 1; BAC29644." evidence="6" ref="1">
    <original>L</original>
    <variation>V</variation>
    <location>
        <position position="192"/>
    </location>
</feature>
<protein>
    <recommendedName>
        <fullName>Pannexin-3</fullName>
    </recommendedName>
</protein>
<name>PANX3_MOUSE</name>
<keyword id="KW-1003">Cell membrane</keyword>
<keyword id="KW-0256">Endoplasmic reticulum</keyword>
<keyword id="KW-0325">Glycoprotein</keyword>
<keyword id="KW-0407">Ion channel</keyword>
<keyword id="KW-0406">Ion transport</keyword>
<keyword id="KW-0472">Membrane</keyword>
<keyword id="KW-1185">Reference proteome</keyword>
<keyword id="KW-0812">Transmembrane</keyword>
<keyword id="KW-1133">Transmembrane helix</keyword>
<keyword id="KW-0813">Transport</keyword>
<comment type="function">
    <text evidence="5">Regulator of osteoblast differentiation by functionning as a Ca(2+) channel in the endoplasmic reticulum which regulates calmodulin (CaM) pathways. Allows ATP release into the extracellular space and activation or purinergic receptors.</text>
</comment>
<comment type="catalytic activity">
    <reaction evidence="5">
        <text>Ca(2+)(in) = Ca(2+)(out)</text>
        <dbReference type="Rhea" id="RHEA:29671"/>
        <dbReference type="ChEBI" id="CHEBI:29108"/>
    </reaction>
</comment>
<comment type="catalytic activity">
    <reaction evidence="5">
        <text>ATP(in) = ATP(out)</text>
        <dbReference type="Rhea" id="RHEA:75687"/>
        <dbReference type="ChEBI" id="CHEBI:30616"/>
    </reaction>
</comment>
<comment type="subunit">
    <text evidence="1">Homoheptameric.</text>
</comment>
<comment type="subcellular location">
    <subcellularLocation>
        <location evidence="5">Cell membrane</location>
        <topology evidence="3">Multi-pass membrane protein</topology>
    </subcellularLocation>
    <subcellularLocation>
        <location evidence="5">Endoplasmic reticulum membrane</location>
        <topology evidence="3">Multi-pass membrane protein</topology>
    </subcellularLocation>
</comment>
<comment type="tissue specificity">
    <text evidence="5">Expressed in skin, cartilage, heart, lung, liver, spleen, thymus and kidney. Not expressed in brain. Expressed in calvarial cells (PubMed:21690309).</text>
</comment>
<comment type="developmental stage">
    <text evidence="5">Induced during osteogenic differentiation.</text>
</comment>
<comment type="PTM">
    <text evidence="4">N-glycosylation may play a role in cell surface targeting.</text>
</comment>
<comment type="similarity">
    <text evidence="3">Belongs to the pannexin family.</text>
</comment>
<dbReference type="EMBL" id="AK028288">
    <property type="protein sequence ID" value="BAC25860.1"/>
    <property type="molecule type" value="mRNA"/>
</dbReference>
<dbReference type="EMBL" id="AK036933">
    <property type="protein sequence ID" value="BAC29644.1"/>
    <property type="molecule type" value="mRNA"/>
</dbReference>
<dbReference type="EMBL" id="BC052822">
    <property type="protein sequence ID" value="AAH52822.1"/>
    <property type="molecule type" value="mRNA"/>
</dbReference>
<dbReference type="CCDS" id="CCDS22984.1"/>
<dbReference type="RefSeq" id="NP_766042.2">
    <property type="nucleotide sequence ID" value="NM_172454.2"/>
</dbReference>
<dbReference type="SMR" id="Q8CEG0"/>
<dbReference type="FunCoup" id="Q8CEG0">
    <property type="interactions" value="935"/>
</dbReference>
<dbReference type="STRING" id="10090.ENSMUSP00000011262"/>
<dbReference type="GlyCosmos" id="Q8CEG0">
    <property type="glycosylation" value="1 site, No reported glycans"/>
</dbReference>
<dbReference type="GlyGen" id="Q8CEG0">
    <property type="glycosylation" value="1 site"/>
</dbReference>
<dbReference type="iPTMnet" id="Q8CEG0"/>
<dbReference type="PhosphoSitePlus" id="Q8CEG0"/>
<dbReference type="PaxDb" id="10090-ENSMUSP00000011262"/>
<dbReference type="ProteomicsDB" id="294004"/>
<dbReference type="Antibodypedia" id="53990">
    <property type="antibodies" value="92 antibodies from 20 providers"/>
</dbReference>
<dbReference type="Ensembl" id="ENSMUST00000011262.4">
    <property type="protein sequence ID" value="ENSMUSP00000011262.3"/>
    <property type="gene ID" value="ENSMUSG00000011118.5"/>
</dbReference>
<dbReference type="GeneID" id="208098"/>
<dbReference type="KEGG" id="mmu:208098"/>
<dbReference type="UCSC" id="uc009ovi.1">
    <property type="organism name" value="mouse"/>
</dbReference>
<dbReference type="AGR" id="MGI:1918881"/>
<dbReference type="CTD" id="116337"/>
<dbReference type="MGI" id="MGI:1918881">
    <property type="gene designation" value="Panx3"/>
</dbReference>
<dbReference type="VEuPathDB" id="HostDB:ENSMUSG00000011118"/>
<dbReference type="eggNOG" id="ENOG502QRDI">
    <property type="taxonomic scope" value="Eukaryota"/>
</dbReference>
<dbReference type="GeneTree" id="ENSGT00940000153972"/>
<dbReference type="HOGENOM" id="CLU_050054_1_0_1"/>
<dbReference type="InParanoid" id="Q8CEG0"/>
<dbReference type="OMA" id="GQDKMKS"/>
<dbReference type="OrthoDB" id="10056939at2759"/>
<dbReference type="PhylomeDB" id="Q8CEG0"/>
<dbReference type="TreeFam" id="TF333142"/>
<dbReference type="BioGRID-ORCS" id="208098">
    <property type="hits" value="3 hits in 78 CRISPR screens"/>
</dbReference>
<dbReference type="ChiTaRS" id="Panx3">
    <property type="organism name" value="mouse"/>
</dbReference>
<dbReference type="PRO" id="PR:Q8CEG0"/>
<dbReference type="Proteomes" id="UP000000589">
    <property type="component" value="Chromosome 9"/>
</dbReference>
<dbReference type="RNAct" id="Q8CEG0">
    <property type="molecule type" value="protein"/>
</dbReference>
<dbReference type="Bgee" id="ENSMUSG00000011118">
    <property type="expression patterns" value="Expressed in vault of skull and 59 other cell types or tissues"/>
</dbReference>
<dbReference type="ExpressionAtlas" id="Q8CEG0">
    <property type="expression patterns" value="baseline and differential"/>
</dbReference>
<dbReference type="GO" id="GO:0005789">
    <property type="term" value="C:endoplasmic reticulum membrane"/>
    <property type="evidence" value="ECO:0000314"/>
    <property type="project" value="UniProtKB"/>
</dbReference>
<dbReference type="GO" id="GO:0005921">
    <property type="term" value="C:gap junction"/>
    <property type="evidence" value="ECO:0000314"/>
    <property type="project" value="UniProtKB"/>
</dbReference>
<dbReference type="GO" id="GO:0005886">
    <property type="term" value="C:plasma membrane"/>
    <property type="evidence" value="ECO:0000314"/>
    <property type="project" value="MGI"/>
</dbReference>
<dbReference type="GO" id="GO:0005262">
    <property type="term" value="F:calcium channel activity"/>
    <property type="evidence" value="ECO:0000314"/>
    <property type="project" value="UniProtKB"/>
</dbReference>
<dbReference type="GO" id="GO:0055077">
    <property type="term" value="F:gap junction hemi-channel activity"/>
    <property type="evidence" value="ECO:0000314"/>
    <property type="project" value="UniProtKB"/>
</dbReference>
<dbReference type="GO" id="GO:0005198">
    <property type="term" value="F:structural molecule activity"/>
    <property type="evidence" value="ECO:0000250"/>
    <property type="project" value="UniProtKB"/>
</dbReference>
<dbReference type="GO" id="GO:0007267">
    <property type="term" value="P:cell-cell signaling"/>
    <property type="evidence" value="ECO:0007669"/>
    <property type="project" value="Ensembl"/>
</dbReference>
<dbReference type="GO" id="GO:0001649">
    <property type="term" value="P:osteoblast differentiation"/>
    <property type="evidence" value="ECO:0000314"/>
    <property type="project" value="UniProtKB"/>
</dbReference>
<dbReference type="GO" id="GO:0032732">
    <property type="term" value="P:positive regulation of interleukin-1 production"/>
    <property type="evidence" value="ECO:0007669"/>
    <property type="project" value="InterPro"/>
</dbReference>
<dbReference type="InterPro" id="IPR000990">
    <property type="entry name" value="Innexin"/>
</dbReference>
<dbReference type="InterPro" id="IPR039099">
    <property type="entry name" value="Pannexin"/>
</dbReference>
<dbReference type="PANTHER" id="PTHR15759">
    <property type="entry name" value="PANNEXIN"/>
    <property type="match status" value="1"/>
</dbReference>
<dbReference type="PANTHER" id="PTHR15759:SF3">
    <property type="entry name" value="PANNEXIN-3"/>
    <property type="match status" value="1"/>
</dbReference>
<dbReference type="Pfam" id="PF00876">
    <property type="entry name" value="Innexin"/>
    <property type="match status" value="1"/>
</dbReference>
<dbReference type="PROSITE" id="PS51013">
    <property type="entry name" value="PANNEXIN"/>
    <property type="match status" value="1"/>
</dbReference>
<proteinExistence type="evidence at protein level"/>
<sequence length="392" mass="44928">MSLAHTAAEYMLSDALLPDRRGSRLKGLRLELPLDKMVKFITVGFPLLLMSLAFAQEFSSGSPISCFSPSNFSVRQAAYVDSSCWDSLAHHTQDKAGQYKVKSLWPHKALPYSLLALAVAMYLPVLLWQYVAVPSLSSDLLFIISELDKSYNRSIRLVQHMLQIRQSSSDPHVFWDELEKARKERYFEFPLLERYLECKQRSHWLVATYLLRNALLLLFTSATYLYLGQFHLDVFFQDEFNCFIKTGLLHDETHVPELITCRLTSLSVFQIVSVSSAAIYTILVPVIIYNLTRLCRWDKGLLSIYEMLPAFDLLSRKMLGCPINDLNVILLFLRANISELISFSWLSVLSVLKDTTTQKHNIDTVVDFMTFVAGLEPSKPKHLTQHTYDEHA</sequence>
<organism>
    <name type="scientific">Mus musculus</name>
    <name type="common">Mouse</name>
    <dbReference type="NCBI Taxonomy" id="10090"/>
    <lineage>
        <taxon>Eukaryota</taxon>
        <taxon>Metazoa</taxon>
        <taxon>Chordata</taxon>
        <taxon>Craniata</taxon>
        <taxon>Vertebrata</taxon>
        <taxon>Euteleostomi</taxon>
        <taxon>Mammalia</taxon>
        <taxon>Eutheria</taxon>
        <taxon>Euarchontoglires</taxon>
        <taxon>Glires</taxon>
        <taxon>Rodentia</taxon>
        <taxon>Myomorpha</taxon>
        <taxon>Muroidea</taxon>
        <taxon>Muridae</taxon>
        <taxon>Murinae</taxon>
        <taxon>Mus</taxon>
        <taxon>Mus</taxon>
    </lineage>
</organism>
<reference key="1">
    <citation type="journal article" date="2005" name="Science">
        <title>The transcriptional landscape of the mammalian genome.</title>
        <authorList>
            <person name="Carninci P."/>
            <person name="Kasukawa T."/>
            <person name="Katayama S."/>
            <person name="Gough J."/>
            <person name="Frith M.C."/>
            <person name="Maeda N."/>
            <person name="Oyama R."/>
            <person name="Ravasi T."/>
            <person name="Lenhard B."/>
            <person name="Wells C."/>
            <person name="Kodzius R."/>
            <person name="Shimokawa K."/>
            <person name="Bajic V.B."/>
            <person name="Brenner S.E."/>
            <person name="Batalov S."/>
            <person name="Forrest A.R."/>
            <person name="Zavolan M."/>
            <person name="Davis M.J."/>
            <person name="Wilming L.G."/>
            <person name="Aidinis V."/>
            <person name="Allen J.E."/>
            <person name="Ambesi-Impiombato A."/>
            <person name="Apweiler R."/>
            <person name="Aturaliya R.N."/>
            <person name="Bailey T.L."/>
            <person name="Bansal M."/>
            <person name="Baxter L."/>
            <person name="Beisel K.W."/>
            <person name="Bersano T."/>
            <person name="Bono H."/>
            <person name="Chalk A.M."/>
            <person name="Chiu K.P."/>
            <person name="Choudhary V."/>
            <person name="Christoffels A."/>
            <person name="Clutterbuck D.R."/>
            <person name="Crowe M.L."/>
            <person name="Dalla E."/>
            <person name="Dalrymple B.P."/>
            <person name="de Bono B."/>
            <person name="Della Gatta G."/>
            <person name="di Bernardo D."/>
            <person name="Down T."/>
            <person name="Engstrom P."/>
            <person name="Fagiolini M."/>
            <person name="Faulkner G."/>
            <person name="Fletcher C.F."/>
            <person name="Fukushima T."/>
            <person name="Furuno M."/>
            <person name="Futaki S."/>
            <person name="Gariboldi M."/>
            <person name="Georgii-Hemming P."/>
            <person name="Gingeras T.R."/>
            <person name="Gojobori T."/>
            <person name="Green R.E."/>
            <person name="Gustincich S."/>
            <person name="Harbers M."/>
            <person name="Hayashi Y."/>
            <person name="Hensch T.K."/>
            <person name="Hirokawa N."/>
            <person name="Hill D."/>
            <person name="Huminiecki L."/>
            <person name="Iacono M."/>
            <person name="Ikeo K."/>
            <person name="Iwama A."/>
            <person name="Ishikawa T."/>
            <person name="Jakt M."/>
            <person name="Kanapin A."/>
            <person name="Katoh M."/>
            <person name="Kawasawa Y."/>
            <person name="Kelso J."/>
            <person name="Kitamura H."/>
            <person name="Kitano H."/>
            <person name="Kollias G."/>
            <person name="Krishnan S.P."/>
            <person name="Kruger A."/>
            <person name="Kummerfeld S.K."/>
            <person name="Kurochkin I.V."/>
            <person name="Lareau L.F."/>
            <person name="Lazarevic D."/>
            <person name="Lipovich L."/>
            <person name="Liu J."/>
            <person name="Liuni S."/>
            <person name="McWilliam S."/>
            <person name="Madan Babu M."/>
            <person name="Madera M."/>
            <person name="Marchionni L."/>
            <person name="Matsuda H."/>
            <person name="Matsuzawa S."/>
            <person name="Miki H."/>
            <person name="Mignone F."/>
            <person name="Miyake S."/>
            <person name="Morris K."/>
            <person name="Mottagui-Tabar S."/>
            <person name="Mulder N."/>
            <person name="Nakano N."/>
            <person name="Nakauchi H."/>
            <person name="Ng P."/>
            <person name="Nilsson R."/>
            <person name="Nishiguchi S."/>
            <person name="Nishikawa S."/>
            <person name="Nori F."/>
            <person name="Ohara O."/>
            <person name="Okazaki Y."/>
            <person name="Orlando V."/>
            <person name="Pang K.C."/>
            <person name="Pavan W.J."/>
            <person name="Pavesi G."/>
            <person name="Pesole G."/>
            <person name="Petrovsky N."/>
            <person name="Piazza S."/>
            <person name="Reed J."/>
            <person name="Reid J.F."/>
            <person name="Ring B.Z."/>
            <person name="Ringwald M."/>
            <person name="Rost B."/>
            <person name="Ruan Y."/>
            <person name="Salzberg S.L."/>
            <person name="Sandelin A."/>
            <person name="Schneider C."/>
            <person name="Schoenbach C."/>
            <person name="Sekiguchi K."/>
            <person name="Semple C.A."/>
            <person name="Seno S."/>
            <person name="Sessa L."/>
            <person name="Sheng Y."/>
            <person name="Shibata Y."/>
            <person name="Shimada H."/>
            <person name="Shimada K."/>
            <person name="Silva D."/>
            <person name="Sinclair B."/>
            <person name="Sperling S."/>
            <person name="Stupka E."/>
            <person name="Sugiura K."/>
            <person name="Sultana R."/>
            <person name="Takenaka Y."/>
            <person name="Taki K."/>
            <person name="Tammoja K."/>
            <person name="Tan S.L."/>
            <person name="Tang S."/>
            <person name="Taylor M.S."/>
            <person name="Tegner J."/>
            <person name="Teichmann S.A."/>
            <person name="Ueda H.R."/>
            <person name="van Nimwegen E."/>
            <person name="Verardo R."/>
            <person name="Wei C.L."/>
            <person name="Yagi K."/>
            <person name="Yamanishi H."/>
            <person name="Zabarovsky E."/>
            <person name="Zhu S."/>
            <person name="Zimmer A."/>
            <person name="Hide W."/>
            <person name="Bult C."/>
            <person name="Grimmond S.M."/>
            <person name="Teasdale R.D."/>
            <person name="Liu E.T."/>
            <person name="Brusic V."/>
            <person name="Quackenbush J."/>
            <person name="Wahlestedt C."/>
            <person name="Mattick J.S."/>
            <person name="Hume D.A."/>
            <person name="Kai C."/>
            <person name="Sasaki D."/>
            <person name="Tomaru Y."/>
            <person name="Fukuda S."/>
            <person name="Kanamori-Katayama M."/>
            <person name="Suzuki M."/>
            <person name="Aoki J."/>
            <person name="Arakawa T."/>
            <person name="Iida J."/>
            <person name="Imamura K."/>
            <person name="Itoh M."/>
            <person name="Kato T."/>
            <person name="Kawaji H."/>
            <person name="Kawagashira N."/>
            <person name="Kawashima T."/>
            <person name="Kojima M."/>
            <person name="Kondo S."/>
            <person name="Konno H."/>
            <person name="Nakano K."/>
            <person name="Ninomiya N."/>
            <person name="Nishio T."/>
            <person name="Okada M."/>
            <person name="Plessy C."/>
            <person name="Shibata K."/>
            <person name="Shiraki T."/>
            <person name="Suzuki S."/>
            <person name="Tagami M."/>
            <person name="Waki K."/>
            <person name="Watahiki A."/>
            <person name="Okamura-Oho Y."/>
            <person name="Suzuki H."/>
            <person name="Kawai J."/>
            <person name="Hayashizaki Y."/>
        </authorList>
    </citation>
    <scope>NUCLEOTIDE SEQUENCE [LARGE SCALE MRNA]</scope>
    <source>
        <strain>C57BL/6J</strain>
        <tissue>Embryonic head</tissue>
    </source>
</reference>
<reference key="2">
    <citation type="journal article" date="2004" name="Genome Res.">
        <title>The status, quality, and expansion of the NIH full-length cDNA project: the Mammalian Gene Collection (MGC).</title>
        <authorList>
            <consortium name="The MGC Project Team"/>
        </authorList>
    </citation>
    <scope>NUCLEOTIDE SEQUENCE [LARGE SCALE MRNA]</scope>
    <source>
        <strain>C3H/He</strain>
        <tissue>Osteoblast</tissue>
    </source>
</reference>
<reference key="3">
    <citation type="journal article" date="2007" name="J. Cell Sci.">
        <title>Pannexin 1 and pannexin 3 are glycoproteins that exhibit many distinct characteristics from the connexin family of gap junction proteins.</title>
        <authorList>
            <person name="Penuela S."/>
            <person name="Bhalla R."/>
            <person name="Gong X.Q."/>
            <person name="Cowan K.N."/>
            <person name="Celetti S.J."/>
            <person name="Cowan B.J."/>
            <person name="Bai D."/>
            <person name="Shao Q."/>
            <person name="Laird D.W."/>
        </authorList>
    </citation>
    <scope>GLYCOSYLATION AT ASN-71</scope>
    <scope>MUTAGENESIS OF ASN-71</scope>
</reference>
<reference key="4">
    <citation type="journal article" date="2011" name="J. Cell Biol.">
        <title>Pannexin 3 functions as an ER Ca(2+) channel, hemichannel, and gap junction to promote osteoblast differentiation.</title>
        <authorList>
            <person name="Ishikawa M."/>
            <person name="Iwamoto T."/>
            <person name="Nakamura T."/>
            <person name="Doyle A."/>
            <person name="Fukumoto S."/>
            <person name="Yamada Y."/>
        </authorList>
    </citation>
    <scope>FUNCTION</scope>
    <scope>TRANSPORTER ACTIVITY</scope>
    <scope>SUBCELLULAR LOCATION</scope>
    <scope>TISSUE SPECIFICITY</scope>
    <scope>DEVELOPMENTAL STAGE</scope>
</reference>
<evidence type="ECO:0000250" key="1">
    <source>
        <dbReference type="UniProtKB" id="Q96QZ0"/>
    </source>
</evidence>
<evidence type="ECO:0000255" key="2"/>
<evidence type="ECO:0000255" key="3">
    <source>
        <dbReference type="PROSITE-ProRule" id="PRU00351"/>
    </source>
</evidence>
<evidence type="ECO:0000269" key="4">
    <source>
    </source>
</evidence>
<evidence type="ECO:0000269" key="5">
    <source>
    </source>
</evidence>
<evidence type="ECO:0000305" key="6"/>
<gene>
    <name type="primary">Panx3</name>
</gene>